<organism>
    <name type="scientific">Canis lupus familiaris</name>
    <name type="common">Dog</name>
    <name type="synonym">Canis familiaris</name>
    <dbReference type="NCBI Taxonomy" id="9615"/>
    <lineage>
        <taxon>Eukaryota</taxon>
        <taxon>Metazoa</taxon>
        <taxon>Chordata</taxon>
        <taxon>Craniata</taxon>
        <taxon>Vertebrata</taxon>
        <taxon>Euteleostomi</taxon>
        <taxon>Mammalia</taxon>
        <taxon>Eutheria</taxon>
        <taxon>Laurasiatheria</taxon>
        <taxon>Carnivora</taxon>
        <taxon>Caniformia</taxon>
        <taxon>Canidae</taxon>
        <taxon>Canis</taxon>
    </lineage>
</organism>
<evidence type="ECO:0000250" key="1"/>
<evidence type="ECO:0000255" key="2"/>
<evidence type="ECO:0000269" key="3">
    <source>
    </source>
</evidence>
<evidence type="ECO:0000305" key="4"/>
<evidence type="ECO:0007829" key="5">
    <source>
        <dbReference type="PDB" id="7DRU"/>
    </source>
</evidence>
<dbReference type="EMBL" id="AF027177">
    <property type="protein sequence ID" value="AAC48794.1"/>
    <property type="molecule type" value="mRNA"/>
</dbReference>
<dbReference type="RefSeq" id="NP_001003190.1">
    <property type="nucleotide sequence ID" value="NM_001003190.1"/>
</dbReference>
<dbReference type="PDB" id="7DRU">
    <property type="method" value="X-ray"/>
    <property type="resolution" value="2.50 A"/>
    <property type="chains" value="A/B/C/D/E/F/G=19-174"/>
</dbReference>
<dbReference type="PDB" id="8AEH">
    <property type="method" value="X-ray"/>
    <property type="resolution" value="3.00 A"/>
    <property type="chains" value="AA1=19-174"/>
</dbReference>
<dbReference type="PDB" id="8EPU">
    <property type="method" value="X-ray"/>
    <property type="resolution" value="1.60 A"/>
    <property type="chains" value="A=27-174"/>
</dbReference>
<dbReference type="PDB" id="8VQF">
    <property type="method" value="X-ray"/>
    <property type="resolution" value="3.11 A"/>
    <property type="chains" value="C=19-174"/>
</dbReference>
<dbReference type="PDB" id="8VQG">
    <property type="method" value="X-ray"/>
    <property type="resolution" value="2.55 A"/>
    <property type="chains" value="A/B/C=27-174"/>
</dbReference>
<dbReference type="PDBsum" id="7DRU"/>
<dbReference type="PDBsum" id="8AEH"/>
<dbReference type="PDBsum" id="8EPU"/>
<dbReference type="PDBsum" id="8VQF"/>
<dbReference type="PDBsum" id="8VQG"/>
<dbReference type="SMR" id="O18873"/>
<dbReference type="FunCoup" id="O18873">
    <property type="interactions" value="2"/>
</dbReference>
<dbReference type="STRING" id="9615.ENSCAFP00000038987"/>
<dbReference type="Allergome" id="174">
    <property type="allergen name" value="Can f 1"/>
</dbReference>
<dbReference type="Allergome" id="3169">
    <property type="allergen name" value="Can f 1.0101"/>
</dbReference>
<dbReference type="PaxDb" id="9612-ENSCAFP00000029242"/>
<dbReference type="ABCD" id="O18873">
    <property type="antibodies" value="1 sequenced antibody"/>
</dbReference>
<dbReference type="GeneID" id="403830"/>
<dbReference type="KEGG" id="cfa:403830"/>
<dbReference type="CTD" id="29989"/>
<dbReference type="eggNOG" id="ENOG502S22P">
    <property type="taxonomic scope" value="Eukaryota"/>
</dbReference>
<dbReference type="InParanoid" id="O18873"/>
<dbReference type="OrthoDB" id="24791at33554"/>
<dbReference type="Proteomes" id="UP000002254">
    <property type="component" value="Unplaced"/>
</dbReference>
<dbReference type="Proteomes" id="UP000694429">
    <property type="component" value="Unplaced"/>
</dbReference>
<dbReference type="Proteomes" id="UP000694542">
    <property type="component" value="Unplaced"/>
</dbReference>
<dbReference type="Proteomes" id="UP000805418">
    <property type="component" value="Unplaced"/>
</dbReference>
<dbReference type="GO" id="GO:0005615">
    <property type="term" value="C:extracellular space"/>
    <property type="evidence" value="ECO:0000318"/>
    <property type="project" value="GO_Central"/>
</dbReference>
<dbReference type="GO" id="GO:0036094">
    <property type="term" value="F:small molecule binding"/>
    <property type="evidence" value="ECO:0007669"/>
    <property type="project" value="InterPro"/>
</dbReference>
<dbReference type="CDD" id="cd19414">
    <property type="entry name" value="lipocalin_1_3_4_13-like"/>
    <property type="match status" value="1"/>
</dbReference>
<dbReference type="Gene3D" id="2.40.128.20">
    <property type="match status" value="1"/>
</dbReference>
<dbReference type="InterPro" id="IPR012674">
    <property type="entry name" value="Calycin"/>
</dbReference>
<dbReference type="InterPro" id="IPR002345">
    <property type="entry name" value="Lipocalin"/>
</dbReference>
<dbReference type="InterPro" id="IPR000566">
    <property type="entry name" value="Lipocln_cytosolic_FA-bd_dom"/>
</dbReference>
<dbReference type="InterPro" id="IPR002450">
    <property type="entry name" value="von_Ebner_gland"/>
</dbReference>
<dbReference type="PANTHER" id="PTHR11430">
    <property type="entry name" value="LIPOCALIN"/>
    <property type="match status" value="1"/>
</dbReference>
<dbReference type="PANTHER" id="PTHR11430:SF124">
    <property type="entry name" value="LIPOCALIN 1-LIKE PROTEIN 1-RELATED"/>
    <property type="match status" value="1"/>
</dbReference>
<dbReference type="Pfam" id="PF00061">
    <property type="entry name" value="Lipocalin"/>
    <property type="match status" value="1"/>
</dbReference>
<dbReference type="PRINTS" id="PR01175">
    <property type="entry name" value="VNEBNERGLAND"/>
</dbReference>
<dbReference type="SUPFAM" id="SSF50814">
    <property type="entry name" value="Lipocalins"/>
    <property type="match status" value="1"/>
</dbReference>
<sequence>MKTLLLTIGFSLIAILQAQDTPALGKDTVAVSGKWYLKAMTADQEVPEKPDSVTPMILKAQKGGNLEAKITMLTNGQCQNITVVLHKTSEPGKYTAYEGQRVVFIQPSPVRDHYILYCEGELHGRQIRMAKLLGRDPEQSQEALEDFREFSRAKGLNQEILELAQSETCSPGGQ</sequence>
<reference key="1">
    <citation type="journal article" date="1997" name="Immunology">
        <title>The major dog allergens, Can f 1 and Can f 2, are salivary lipocalin proteins: cloning and immunological characterization of the recombinant forms.</title>
        <authorList>
            <person name="Konieczny A."/>
            <person name="Morgenstern J.P."/>
            <person name="Bizinkauskas C.B."/>
            <person name="Lilley C.H."/>
            <person name="Brauer A.W."/>
            <person name="Bond J.F."/>
            <person name="Aalberse R.C."/>
            <person name="Wallner B.P."/>
            <person name="Kasaian M.T."/>
        </authorList>
    </citation>
    <scope>NUCLEOTIDE SEQUENCE [MRNA]</scope>
    <scope>ALLERGEN</scope>
</reference>
<feature type="signal peptide" evidence="2">
    <location>
        <begin position="1"/>
        <end position="18"/>
    </location>
</feature>
<feature type="chain" id="PRO_0000017980" description="Major allergen Can f 1">
    <location>
        <begin position="19"/>
        <end position="174"/>
    </location>
</feature>
<feature type="glycosylation site" description="N-linked (GlcNAc...) asparagine" evidence="2">
    <location>
        <position position="80"/>
    </location>
</feature>
<feature type="disulfide bond" evidence="1">
    <location>
        <begin position="78"/>
        <end position="169"/>
    </location>
</feature>
<feature type="strand" evidence="5">
    <location>
        <begin position="33"/>
        <end position="44"/>
    </location>
</feature>
<feature type="strand" evidence="5">
    <location>
        <begin position="51"/>
        <end position="53"/>
    </location>
</feature>
<feature type="strand" evidence="5">
    <location>
        <begin position="56"/>
        <end position="61"/>
    </location>
</feature>
<feature type="helix" evidence="5">
    <location>
        <begin position="62"/>
        <end position="64"/>
    </location>
</feature>
<feature type="strand" evidence="5">
    <location>
        <begin position="65"/>
        <end position="74"/>
    </location>
</feature>
<feature type="strand" evidence="5">
    <location>
        <begin position="77"/>
        <end position="87"/>
    </location>
</feature>
<feature type="strand" evidence="5">
    <location>
        <begin position="93"/>
        <end position="96"/>
    </location>
</feature>
<feature type="strand" evidence="5">
    <location>
        <begin position="101"/>
        <end position="107"/>
    </location>
</feature>
<feature type="strand" evidence="5">
    <location>
        <begin position="113"/>
        <end position="120"/>
    </location>
</feature>
<feature type="strand" evidence="5">
    <location>
        <begin position="127"/>
        <end position="136"/>
    </location>
</feature>
<feature type="helix" evidence="5">
    <location>
        <begin position="141"/>
        <end position="152"/>
    </location>
</feature>
<feature type="turn" evidence="5">
    <location>
        <begin position="153"/>
        <end position="155"/>
    </location>
</feature>
<feature type="strand" evidence="5">
    <location>
        <begin position="160"/>
        <end position="162"/>
    </location>
</feature>
<name>ALL1_CANLF</name>
<protein>
    <recommendedName>
        <fullName>Major allergen Can f 1</fullName>
    </recommendedName>
    <alternativeName>
        <fullName>Allergen Dog 1</fullName>
    </alternativeName>
    <allergenName>Can f 1</allergenName>
</protein>
<proteinExistence type="evidence at protein level"/>
<comment type="subcellular location">
    <subcellularLocation>
        <location>Secreted</location>
    </subcellularLocation>
</comment>
<comment type="tissue specificity">
    <text>Tongue epithelial tissue.</text>
</comment>
<comment type="allergen">
    <text evidence="3">Causes an allergic reaction in human.</text>
</comment>
<comment type="similarity">
    <text evidence="4">Belongs to the calycin superfamily. Lipocalin family.</text>
</comment>
<accession>O18873</accession>
<keyword id="KW-0002">3D-structure</keyword>
<keyword id="KW-0020">Allergen</keyword>
<keyword id="KW-1015">Disulfide bond</keyword>
<keyword id="KW-0325">Glycoprotein</keyword>
<keyword id="KW-1185">Reference proteome</keyword>
<keyword id="KW-0964">Secreted</keyword>
<keyword id="KW-0732">Signal</keyword>
<keyword id="KW-0813">Transport</keyword>